<feature type="chain" id="PRO_0000350909" description="Uncharacterized protein DDB_G0284127">
    <location>
        <begin position="1"/>
        <end position="462"/>
    </location>
</feature>
<feature type="region of interest" description="Disordered" evidence="2">
    <location>
        <begin position="1"/>
        <end position="108"/>
    </location>
</feature>
<feature type="region of interest" description="Disordered" evidence="2">
    <location>
        <begin position="188"/>
        <end position="208"/>
    </location>
</feature>
<feature type="coiled-coil region" evidence="1">
    <location>
        <begin position="119"/>
        <end position="150"/>
    </location>
</feature>
<feature type="compositionally biased region" description="Basic and acidic residues" evidence="2">
    <location>
        <begin position="36"/>
        <end position="51"/>
    </location>
</feature>
<feature type="compositionally biased region" description="Low complexity" evidence="2">
    <location>
        <begin position="64"/>
        <end position="95"/>
    </location>
</feature>
<feature type="compositionally biased region" description="Low complexity" evidence="2">
    <location>
        <begin position="190"/>
        <end position="208"/>
    </location>
</feature>
<name>Y8421_DICDI</name>
<reference key="1">
    <citation type="journal article" date="2005" name="Nature">
        <title>The genome of the social amoeba Dictyostelium discoideum.</title>
        <authorList>
            <person name="Eichinger L."/>
            <person name="Pachebat J.A."/>
            <person name="Gloeckner G."/>
            <person name="Rajandream M.A."/>
            <person name="Sucgang R."/>
            <person name="Berriman M."/>
            <person name="Song J."/>
            <person name="Olsen R."/>
            <person name="Szafranski K."/>
            <person name="Xu Q."/>
            <person name="Tunggal B."/>
            <person name="Kummerfeld S."/>
            <person name="Madera M."/>
            <person name="Konfortov B.A."/>
            <person name="Rivero F."/>
            <person name="Bankier A.T."/>
            <person name="Lehmann R."/>
            <person name="Hamlin N."/>
            <person name="Davies R."/>
            <person name="Gaudet P."/>
            <person name="Fey P."/>
            <person name="Pilcher K."/>
            <person name="Chen G."/>
            <person name="Saunders D."/>
            <person name="Sodergren E.J."/>
            <person name="Davis P."/>
            <person name="Kerhornou A."/>
            <person name="Nie X."/>
            <person name="Hall N."/>
            <person name="Anjard C."/>
            <person name="Hemphill L."/>
            <person name="Bason N."/>
            <person name="Farbrother P."/>
            <person name="Desany B."/>
            <person name="Just E."/>
            <person name="Morio T."/>
            <person name="Rost R."/>
            <person name="Churcher C.M."/>
            <person name="Cooper J."/>
            <person name="Haydock S."/>
            <person name="van Driessche N."/>
            <person name="Cronin A."/>
            <person name="Goodhead I."/>
            <person name="Muzny D.M."/>
            <person name="Mourier T."/>
            <person name="Pain A."/>
            <person name="Lu M."/>
            <person name="Harper D."/>
            <person name="Lindsay R."/>
            <person name="Hauser H."/>
            <person name="James K.D."/>
            <person name="Quiles M."/>
            <person name="Madan Babu M."/>
            <person name="Saito T."/>
            <person name="Buchrieser C."/>
            <person name="Wardroper A."/>
            <person name="Felder M."/>
            <person name="Thangavelu M."/>
            <person name="Johnson D."/>
            <person name="Knights A."/>
            <person name="Loulseged H."/>
            <person name="Mungall K.L."/>
            <person name="Oliver K."/>
            <person name="Price C."/>
            <person name="Quail M.A."/>
            <person name="Urushihara H."/>
            <person name="Hernandez J."/>
            <person name="Rabbinowitsch E."/>
            <person name="Steffen D."/>
            <person name="Sanders M."/>
            <person name="Ma J."/>
            <person name="Kohara Y."/>
            <person name="Sharp S."/>
            <person name="Simmonds M.N."/>
            <person name="Spiegler S."/>
            <person name="Tivey A."/>
            <person name="Sugano S."/>
            <person name="White B."/>
            <person name="Walker D."/>
            <person name="Woodward J.R."/>
            <person name="Winckler T."/>
            <person name="Tanaka Y."/>
            <person name="Shaulsky G."/>
            <person name="Schleicher M."/>
            <person name="Weinstock G.M."/>
            <person name="Rosenthal A."/>
            <person name="Cox E.C."/>
            <person name="Chisholm R.L."/>
            <person name="Gibbs R.A."/>
            <person name="Loomis W.F."/>
            <person name="Platzer M."/>
            <person name="Kay R.R."/>
            <person name="Williams J.G."/>
            <person name="Dear P.H."/>
            <person name="Noegel A.A."/>
            <person name="Barrell B.G."/>
            <person name="Kuspa A."/>
        </authorList>
    </citation>
    <scope>NUCLEOTIDE SEQUENCE [LARGE SCALE GENOMIC DNA]</scope>
    <source>
        <strain>AX4</strain>
    </source>
</reference>
<dbReference type="EMBL" id="AAFI02000063">
    <property type="protein sequence ID" value="EAL65404.1"/>
    <property type="molecule type" value="Genomic_DNA"/>
</dbReference>
<dbReference type="RefSeq" id="XP_638773.1">
    <property type="nucleotide sequence ID" value="XM_633681.1"/>
</dbReference>
<dbReference type="SMR" id="Q54Q24"/>
<dbReference type="STRING" id="44689.Q54Q24"/>
<dbReference type="PaxDb" id="44689-DDB0238421"/>
<dbReference type="EnsemblProtists" id="EAL65404">
    <property type="protein sequence ID" value="EAL65404"/>
    <property type="gene ID" value="DDB_G0284127"/>
</dbReference>
<dbReference type="GeneID" id="8624444"/>
<dbReference type="KEGG" id="ddi:DDB_G0284127"/>
<dbReference type="dictyBase" id="DDB_G0284127"/>
<dbReference type="VEuPathDB" id="AmoebaDB:DDB_G0284127"/>
<dbReference type="eggNOG" id="ENOG502RHYW">
    <property type="taxonomic scope" value="Eukaryota"/>
</dbReference>
<dbReference type="HOGENOM" id="CLU_592413_0_0_1"/>
<dbReference type="InParanoid" id="Q54Q24"/>
<dbReference type="OMA" id="GHYHKKY"/>
<dbReference type="PRO" id="PR:Q54Q24"/>
<dbReference type="Proteomes" id="UP000002195">
    <property type="component" value="Chromosome 4"/>
</dbReference>
<dbReference type="GO" id="GO:0099078">
    <property type="term" value="C:BORC complex"/>
    <property type="evidence" value="ECO:0000318"/>
    <property type="project" value="GO_Central"/>
</dbReference>
<dbReference type="GO" id="GO:0032418">
    <property type="term" value="P:lysosome localization"/>
    <property type="evidence" value="ECO:0000318"/>
    <property type="project" value="GO_Central"/>
</dbReference>
<dbReference type="InterPro" id="IPR019314">
    <property type="entry name" value="BORCS6"/>
</dbReference>
<dbReference type="InterPro" id="IPR046465">
    <property type="entry name" value="BORCS6_C"/>
</dbReference>
<dbReference type="PANTHER" id="PTHR13440">
    <property type="entry name" value="BLOC-1 RELATED COMPLEX SUBUNIT 6"/>
    <property type="match status" value="1"/>
</dbReference>
<dbReference type="PANTHER" id="PTHR13440:SF7">
    <property type="entry name" value="BLOC-1 RELATED COMPLEX SUBUNIT 6"/>
    <property type="match status" value="1"/>
</dbReference>
<dbReference type="Pfam" id="PF10157">
    <property type="entry name" value="BORCS6"/>
    <property type="match status" value="1"/>
</dbReference>
<keyword id="KW-0175">Coiled coil</keyword>
<keyword id="KW-1185">Reference proteome</keyword>
<accession>Q54Q24</accession>
<protein>
    <recommendedName>
        <fullName>Uncharacterized protein DDB_G0284127</fullName>
    </recommendedName>
</protein>
<evidence type="ECO:0000255" key="1"/>
<evidence type="ECO:0000256" key="2">
    <source>
        <dbReference type="SAM" id="MobiDB-lite"/>
    </source>
</evidence>
<proteinExistence type="predicted"/>
<gene>
    <name type="ORF">DDB_G0284127</name>
</gene>
<organism>
    <name type="scientific">Dictyostelium discoideum</name>
    <name type="common">Social amoeba</name>
    <dbReference type="NCBI Taxonomy" id="44689"/>
    <lineage>
        <taxon>Eukaryota</taxon>
        <taxon>Amoebozoa</taxon>
        <taxon>Evosea</taxon>
        <taxon>Eumycetozoa</taxon>
        <taxon>Dictyostelia</taxon>
        <taxon>Dictyosteliales</taxon>
        <taxon>Dictyosteliaceae</taxon>
        <taxon>Dictyostelium</taxon>
    </lineage>
</organism>
<sequence>MEDSNTNKDINTNITNDDDDNKNINNNNNNTEEDVTVERILERKQKERESKLASMMSHYHQKYSSPSSLLSSPISSNDNNNNNNNNNNESFDINNTSYNGQDDQDEMDDFESEEYKQILLKRKAALAAKKKESLAEQMKKYNQQYDSIISGVNTILSPPPSSTTSNSSTSNNSSLNVSPVLFSTTSSSKLQSLNNNTSPSTSSSNLIDSTNVQTTSTTTAATSTSTQFTNTNINTNSNTLIENSLKISNENNNELNEQLQQQFILQQEQLREQEELKEKLQQQEIERMQTERKERELQQQKELIKNATLDNQQQQQQQPQLELQQQQSQPQQPILLPPLIFETNDIPLLTNVGFATLKNIECNAIKCSEEVVLLTKTLHQSLSTITKISIELFETFNGSTEVTCNAIGYSVNETKTMIDKCFELNNHTKSVISLHQKIKTVRDQLDKFDQIIHNAIKQMNKT</sequence>